<accession>Q9UWV6</accession>
<organism>
    <name type="scientific">Saccharolobus solfataricus (strain ATCC 35092 / DSM 1617 / JCM 11322 / P2)</name>
    <name type="common">Sulfolobus solfataricus</name>
    <dbReference type="NCBI Taxonomy" id="273057"/>
    <lineage>
        <taxon>Archaea</taxon>
        <taxon>Thermoproteota</taxon>
        <taxon>Thermoprotei</taxon>
        <taxon>Sulfolobales</taxon>
        <taxon>Sulfolobaceae</taxon>
        <taxon>Saccharolobus</taxon>
    </lineage>
</organism>
<dbReference type="EC" id="2.5.1.157" evidence="2"/>
<dbReference type="EMBL" id="Y18930">
    <property type="protein sequence ID" value="CAB57748.1"/>
    <property type="status" value="ALT_INIT"/>
    <property type="molecule type" value="Genomic_DNA"/>
</dbReference>
<dbReference type="EMBL" id="AE006641">
    <property type="protein sequence ID" value="AAK40868.1"/>
    <property type="status" value="ALT_INIT"/>
    <property type="molecule type" value="Genomic_DNA"/>
</dbReference>
<dbReference type="PIR" id="E90201">
    <property type="entry name" value="E90201"/>
</dbReference>
<dbReference type="RefSeq" id="WP_009991056.1">
    <property type="nucleotide sequence ID" value="NC_002754.1"/>
</dbReference>
<dbReference type="PDB" id="5AP8">
    <property type="method" value="X-ray"/>
    <property type="resolution" value="2.25 A"/>
    <property type="chains" value="A/B/C=1-166"/>
</dbReference>
<dbReference type="PDBsum" id="5AP8"/>
<dbReference type="SMR" id="Q9UWV6"/>
<dbReference type="FunCoup" id="Q9UWV6">
    <property type="interactions" value="131"/>
</dbReference>
<dbReference type="STRING" id="273057.SSO0551"/>
<dbReference type="PaxDb" id="273057-SSO0551"/>
<dbReference type="EnsemblBacteria" id="AAK40868">
    <property type="protein sequence ID" value="AAK40868"/>
    <property type="gene ID" value="SSO0551"/>
</dbReference>
<dbReference type="KEGG" id="sso:SSO0551"/>
<dbReference type="PATRIC" id="fig|273057.12.peg.560"/>
<dbReference type="eggNOG" id="arCOG04733">
    <property type="taxonomic scope" value="Archaea"/>
</dbReference>
<dbReference type="HOGENOM" id="CLU_035060_4_1_2"/>
<dbReference type="InParanoid" id="Q9UWV6"/>
<dbReference type="PhylomeDB" id="Q9UWV6"/>
<dbReference type="EvolutionaryTrace" id="Q9UWV6"/>
<dbReference type="Proteomes" id="UP000001974">
    <property type="component" value="Chromosome"/>
</dbReference>
<dbReference type="GO" id="GO:0005737">
    <property type="term" value="C:cytoplasm"/>
    <property type="evidence" value="ECO:0007669"/>
    <property type="project" value="UniProtKB-SubCell"/>
</dbReference>
<dbReference type="GO" id="GO:0106388">
    <property type="term" value="F:18S rRNA aminocarboxypropyltransferase activity"/>
    <property type="evidence" value="ECO:0007669"/>
    <property type="project" value="InterPro"/>
</dbReference>
<dbReference type="GO" id="GO:0019843">
    <property type="term" value="F:rRNA binding"/>
    <property type="evidence" value="ECO:0000314"/>
    <property type="project" value="UniProtKB"/>
</dbReference>
<dbReference type="GO" id="GO:1904047">
    <property type="term" value="F:S-adenosyl-L-methionine binding"/>
    <property type="evidence" value="ECO:0000314"/>
    <property type="project" value="UniProtKB"/>
</dbReference>
<dbReference type="GO" id="GO:0000455">
    <property type="term" value="P:enzyme-directed rRNA pseudouridine synthesis"/>
    <property type="evidence" value="ECO:0007669"/>
    <property type="project" value="UniProtKB-UniRule"/>
</dbReference>
<dbReference type="HAMAP" id="MF_01116">
    <property type="entry name" value="TSR3"/>
    <property type="match status" value="1"/>
</dbReference>
<dbReference type="InterPro" id="IPR007209">
    <property type="entry name" value="RNaseL-inhib-like_metal-bd_dom"/>
</dbReference>
<dbReference type="InterPro" id="IPR022968">
    <property type="entry name" value="Tsr3-like"/>
</dbReference>
<dbReference type="InterPro" id="IPR007177">
    <property type="entry name" value="Tsr3_C"/>
</dbReference>
<dbReference type="NCBIfam" id="NF002621">
    <property type="entry name" value="PRK02287.1"/>
    <property type="match status" value="1"/>
</dbReference>
<dbReference type="PANTHER" id="PTHR20426:SF0">
    <property type="entry name" value="18S RRNA AMINOCARBOXYPROPYLTRANSFERASE"/>
    <property type="match status" value="1"/>
</dbReference>
<dbReference type="PANTHER" id="PTHR20426">
    <property type="entry name" value="RIBOSOME BIOGENESIS PROTEIN TSR3 HOMOLOG"/>
    <property type="match status" value="1"/>
</dbReference>
<dbReference type="Pfam" id="PF04068">
    <property type="entry name" value="Fer4_RLI"/>
    <property type="match status" value="1"/>
</dbReference>
<dbReference type="Pfam" id="PF04034">
    <property type="entry name" value="Ribo_biogen_C"/>
    <property type="match status" value="1"/>
</dbReference>
<evidence type="ECO:0000250" key="1">
    <source>
        <dbReference type="UniProtKB" id="E1QU22"/>
    </source>
</evidence>
<evidence type="ECO:0000255" key="2">
    <source>
        <dbReference type="HAMAP-Rule" id="MF_01116"/>
    </source>
</evidence>
<evidence type="ECO:0000269" key="3">
    <source>
    </source>
</evidence>
<evidence type="ECO:0000303" key="4">
    <source>
    </source>
</evidence>
<evidence type="ECO:0000305" key="5"/>
<evidence type="ECO:0007744" key="6">
    <source>
        <dbReference type="PDB" id="5AP8"/>
    </source>
</evidence>
<evidence type="ECO:0007829" key="7">
    <source>
        <dbReference type="PDB" id="5AP8"/>
    </source>
</evidence>
<name>TSR3_SACS2</name>
<feature type="chain" id="PRO_0000094422" description="16S rRNA aminocarboxypropyltransferase">
    <location>
        <begin position="1"/>
        <end position="166"/>
    </location>
</feature>
<feature type="binding site" evidence="1 2">
    <location>
        <position position="17"/>
    </location>
    <ligand>
        <name>S-adenosyl-L-methionine</name>
        <dbReference type="ChEBI" id="CHEBI:59789"/>
    </ligand>
</feature>
<feature type="binding site" evidence="1 2">
    <location>
        <position position="62"/>
    </location>
    <ligand>
        <name>S-adenosyl-L-methionine</name>
        <dbReference type="ChEBI" id="CHEBI:59789"/>
    </ligand>
</feature>
<feature type="binding site" evidence="1 2">
    <location>
        <position position="84"/>
    </location>
    <ligand>
        <name>S-adenosyl-L-methionine</name>
        <dbReference type="ChEBI" id="CHEBI:59789"/>
    </ligand>
</feature>
<feature type="binding site" evidence="1 2">
    <location>
        <position position="99"/>
    </location>
    <ligand>
        <name>S-adenosyl-L-methionine</name>
        <dbReference type="ChEBI" id="CHEBI:59789"/>
    </ligand>
</feature>
<feature type="binding site" evidence="1 2">
    <location>
        <position position="103"/>
    </location>
    <ligand>
        <name>S-adenosyl-L-methionine</name>
        <dbReference type="ChEBI" id="CHEBI:59789"/>
    </ligand>
</feature>
<feature type="mutagenesis site" description="Does not affect S-adenosyl-L-methionine-binding." evidence="3">
    <original>D</original>
    <variation>A</variation>
    <location>
        <position position="63"/>
    </location>
</feature>
<feature type="mutagenesis site" description="Decreased S-adenosyl-L-methionine-binding." evidence="3">
    <original>W</original>
    <variation>A</variation>
    <location>
        <position position="66"/>
    </location>
</feature>
<feature type="strand" evidence="7">
    <location>
        <begin position="3"/>
        <end position="6"/>
    </location>
</feature>
<feature type="helix" evidence="7">
    <location>
        <begin position="19"/>
        <end position="23"/>
    </location>
</feature>
<feature type="strand" evidence="7">
    <location>
        <begin position="26"/>
        <end position="29"/>
    </location>
</feature>
<feature type="strand" evidence="7">
    <location>
        <begin position="35"/>
        <end position="38"/>
    </location>
</feature>
<feature type="strand" evidence="7">
    <location>
        <begin position="43"/>
        <end position="45"/>
    </location>
</feature>
<feature type="helix" evidence="7">
    <location>
        <begin position="51"/>
        <end position="56"/>
    </location>
</feature>
<feature type="strand" evidence="7">
    <location>
        <begin position="59"/>
        <end position="62"/>
    </location>
</feature>
<feature type="turn" evidence="7">
    <location>
        <begin position="66"/>
        <end position="68"/>
    </location>
</feature>
<feature type="helix" evidence="7">
    <location>
        <begin position="71"/>
        <end position="73"/>
    </location>
</feature>
<feature type="turn" evidence="7">
    <location>
        <begin position="74"/>
        <end position="76"/>
    </location>
</feature>
<feature type="strand" evidence="7">
    <location>
        <begin position="78"/>
        <end position="83"/>
    </location>
</feature>
<feature type="turn" evidence="7">
    <location>
        <begin position="92"/>
        <end position="96"/>
    </location>
</feature>
<feature type="helix" evidence="7">
    <location>
        <begin position="103"/>
        <end position="113"/>
    </location>
</feature>
<feature type="helix" evidence="7">
    <location>
        <begin position="117"/>
        <end position="122"/>
    </location>
</feature>
<feature type="helix" evidence="7">
    <location>
        <begin position="123"/>
        <end position="125"/>
    </location>
</feature>
<feature type="helix" evidence="7">
    <location>
        <begin position="130"/>
        <end position="136"/>
    </location>
</feature>
<feature type="helix" evidence="7">
    <location>
        <begin position="138"/>
        <end position="144"/>
    </location>
</feature>
<feature type="helix" evidence="7">
    <location>
        <begin position="149"/>
        <end position="159"/>
    </location>
</feature>
<feature type="helix" evidence="7">
    <location>
        <begin position="161"/>
        <end position="164"/>
    </location>
</feature>
<proteinExistence type="evidence at protein level"/>
<sequence length="166" mass="19197">MKVYIIDYHKDDPKRCTGKKLVKLKIAEFTRVGKGVVLDPFAQITLSNKDKDIVRRIGITIVDTSWNNTSQSEFKNIRGEHRRIPILFAGNPIHYGIAYKLSSIEALIATLYIVDEVEEAIKLSNVVKWGHTFIELNKELLEAYKNKTEEDIKKIEREIIEKILEK</sequence>
<gene>
    <name type="ordered locus">SSO0551</name>
    <name type="ORF">C21_048</name>
</gene>
<keyword id="KW-0002">3D-structure</keyword>
<keyword id="KW-0963">Cytoplasm</keyword>
<keyword id="KW-1185">Reference proteome</keyword>
<keyword id="KW-0690">Ribosome biogenesis</keyword>
<keyword id="KW-0698">rRNA processing</keyword>
<keyword id="KW-0949">S-adenosyl-L-methionine</keyword>
<keyword id="KW-0808">Transferase</keyword>
<reference key="1">
    <citation type="journal article" date="2000" name="Genome">
        <title>Gene content and organization of a 281-kbp contig from the genome of the extremely thermophilic archaeon, Sulfolobus solfataricus P2.</title>
        <authorList>
            <person name="Charlebois R.L."/>
            <person name="Singh R.K."/>
            <person name="Chan-Weiher C.C.-Y."/>
            <person name="Allard G."/>
            <person name="Chow C."/>
            <person name="Confalonieri F."/>
            <person name="Curtis B."/>
            <person name="Duguet M."/>
            <person name="Erauso G."/>
            <person name="Faguy D."/>
            <person name="Gaasterland T."/>
            <person name="Garrett R.A."/>
            <person name="Gordon P."/>
            <person name="Jeffries A.C."/>
            <person name="Kozera C."/>
            <person name="Kushwaha N."/>
            <person name="Lafleur E."/>
            <person name="Medina N."/>
            <person name="Peng X."/>
            <person name="Penny S.L."/>
            <person name="She Q."/>
            <person name="St Jean A."/>
            <person name="van der Oost J."/>
            <person name="Young F."/>
            <person name="Zivanovic Y."/>
            <person name="Doolittle W.F."/>
            <person name="Ragan M.A."/>
            <person name="Sensen C.W."/>
        </authorList>
    </citation>
    <scope>NUCLEOTIDE SEQUENCE [LARGE SCALE GENOMIC DNA]</scope>
    <source>
        <strain>ATCC 35092 / DSM 1617 / JCM 11322 / P2</strain>
    </source>
</reference>
<reference key="2">
    <citation type="journal article" date="2001" name="Proc. Natl. Acad. Sci. U.S.A.">
        <title>The complete genome of the crenarchaeon Sulfolobus solfataricus P2.</title>
        <authorList>
            <person name="She Q."/>
            <person name="Singh R.K."/>
            <person name="Confalonieri F."/>
            <person name="Zivanovic Y."/>
            <person name="Allard G."/>
            <person name="Awayez M.J."/>
            <person name="Chan-Weiher C.C.-Y."/>
            <person name="Clausen I.G."/>
            <person name="Curtis B.A."/>
            <person name="De Moors A."/>
            <person name="Erauso G."/>
            <person name="Fletcher C."/>
            <person name="Gordon P.M.K."/>
            <person name="Heikamp-de Jong I."/>
            <person name="Jeffries A.C."/>
            <person name="Kozera C.J."/>
            <person name="Medina N."/>
            <person name="Peng X."/>
            <person name="Thi-Ngoc H.P."/>
            <person name="Redder P."/>
            <person name="Schenk M.E."/>
            <person name="Theriault C."/>
            <person name="Tolstrup N."/>
            <person name="Charlebois R.L."/>
            <person name="Doolittle W.F."/>
            <person name="Duguet M."/>
            <person name="Gaasterland T."/>
            <person name="Garrett R.A."/>
            <person name="Ragan M.A."/>
            <person name="Sensen C.W."/>
            <person name="Van der Oost J."/>
        </authorList>
    </citation>
    <scope>NUCLEOTIDE SEQUENCE [LARGE SCALE GENOMIC DNA]</scope>
    <source>
        <strain>ATCC 35092 / DSM 1617 / JCM 11322 / P2</strain>
    </source>
</reference>
<reference evidence="6" key="3">
    <citation type="journal article" date="2016" name="Nucleic Acids Res.">
        <title>Ribosome biogenesis factor Tsr3 is the aminocarboxypropyl transferase responsible for 18S rRNA hypermodification in yeast and humans.</title>
        <authorList>
            <person name="Meyer B."/>
            <person name="Wurm J.P."/>
            <person name="Sharma S."/>
            <person name="Immer C."/>
            <person name="Pogoryelov D."/>
            <person name="Koetter P."/>
            <person name="Lafontaine D.L."/>
            <person name="Woehnert J."/>
            <person name="Entian K.D."/>
        </authorList>
    </citation>
    <scope>X-RAY CRYSTALLOGRAPHY (2.25 ANGSTROMS)</scope>
    <scope>S-ADENOSYL-L-METHIONINE-BINDING</scope>
    <scope>RRNA-BINDING</scope>
    <scope>MUTAGENESIS OF ASP-63 AND TRP-66</scope>
</reference>
<protein>
    <recommendedName>
        <fullName evidence="2 5">16S rRNA aminocarboxypropyltransferase</fullName>
        <ecNumber evidence="2">2.5.1.157</ecNumber>
    </recommendedName>
    <alternativeName>
        <fullName evidence="4">20S S rRNA accumulation protein 3 homolog</fullName>
        <shortName evidence="4">SsTsr3</shortName>
    </alternativeName>
</protein>
<comment type="function">
    <text evidence="2">Aminocarboxypropyltransferase that catalyzes the aminocarboxypropyl transfer on pseudouridine corresponding to position 914 in M.jannaschii 16S rRNA. It constitutes the last step in biosynthesis of the hypermodified N1-methyl-N3-(3-amino-3-carboxypropyl) pseudouridine (m1acp3-Psi).</text>
</comment>
<comment type="catalytic activity">
    <reaction evidence="2">
        <text>an N(1)-methylpseudouridine in rRNA + S-adenosyl-L-methionine = N(1)-methyl-N(3)-[(3S)-3-amino-3-carboxypropyl]pseudouridine in rRNA + S-methyl-5'-thioadenosine + H(+)</text>
        <dbReference type="Rhea" id="RHEA:63296"/>
        <dbReference type="Rhea" id="RHEA-COMP:11634"/>
        <dbReference type="Rhea" id="RHEA-COMP:16310"/>
        <dbReference type="ChEBI" id="CHEBI:15378"/>
        <dbReference type="ChEBI" id="CHEBI:17509"/>
        <dbReference type="ChEBI" id="CHEBI:59789"/>
        <dbReference type="ChEBI" id="CHEBI:74890"/>
        <dbReference type="ChEBI" id="CHEBI:146234"/>
        <dbReference type="EC" id="2.5.1.157"/>
    </reaction>
</comment>
<comment type="subcellular location">
    <subcellularLocation>
        <location evidence="2">Cytoplasm</location>
    </subcellularLocation>
</comment>
<comment type="similarity">
    <text evidence="2">Belongs to the TDD superfamily. TSR3 family.</text>
</comment>
<comment type="sequence caution" evidence="5">
    <conflict type="erroneous initiation">
        <sequence resource="EMBL-CDS" id="AAK40868"/>
    </conflict>
</comment>
<comment type="sequence caution" evidence="5">
    <conflict type="erroneous initiation">
        <sequence resource="EMBL-CDS" id="CAB57748"/>
    </conflict>
</comment>